<reference key="1">
    <citation type="journal article" date="2007" name="Mol. Phylogenet. Evol.">
        <title>Phylogenetic and evolutionary implications of complete chloroplast genome sequences of four early-diverging angiosperms: Buxus (Buxaceae), Chloranthus (Chloranthaceae), Dioscorea (Dioscoreaceae), and Illicium (Schisandraceae).</title>
        <authorList>
            <person name="Hansen D.R."/>
            <person name="Dastidar S.G."/>
            <person name="Cai Z."/>
            <person name="Penaflor C."/>
            <person name="Kuehl J.V."/>
            <person name="Boore J.L."/>
            <person name="Jansen R.K."/>
        </authorList>
    </citation>
    <scope>NUCLEOTIDE SEQUENCE [LARGE SCALE GENOMIC DNA]</scope>
</reference>
<sequence length="101" mass="11926">MDKSKRPFRKSKRSFRKRLPPIGSGDRIDYRNMSLISRFISEQGKILSRRVNRLTLKQQRLITTAIKQARILSSLPFLNNEKQLERTESIPRTTGTRIRNK</sequence>
<accession>A6MME4</accession>
<feature type="chain" id="PRO_0000345574" description="Small ribosomal subunit protein bS18c">
    <location>
        <begin position="1"/>
        <end position="101"/>
    </location>
</feature>
<feature type="region of interest" description="Disordered" evidence="2">
    <location>
        <begin position="1"/>
        <end position="23"/>
    </location>
</feature>
<feature type="compositionally biased region" description="Basic residues" evidence="2">
    <location>
        <begin position="1"/>
        <end position="19"/>
    </location>
</feature>
<organism>
    <name type="scientific">Chloranthus spicatus</name>
    <name type="common">Chulantree</name>
    <name type="synonym">Nigrina spicata</name>
    <dbReference type="NCBI Taxonomy" id="13006"/>
    <lineage>
        <taxon>Eukaryota</taxon>
        <taxon>Viridiplantae</taxon>
        <taxon>Streptophyta</taxon>
        <taxon>Embryophyta</taxon>
        <taxon>Tracheophyta</taxon>
        <taxon>Spermatophyta</taxon>
        <taxon>Magnoliopsida</taxon>
        <taxon>Chloranthales</taxon>
        <taxon>Chloranthaceae</taxon>
        <taxon>Chloranthus</taxon>
    </lineage>
</organism>
<name>RR18_CHLSC</name>
<gene>
    <name evidence="1" type="primary">rps18</name>
</gene>
<evidence type="ECO:0000255" key="1">
    <source>
        <dbReference type="HAMAP-Rule" id="MF_00270"/>
    </source>
</evidence>
<evidence type="ECO:0000256" key="2">
    <source>
        <dbReference type="SAM" id="MobiDB-lite"/>
    </source>
</evidence>
<evidence type="ECO:0000305" key="3"/>
<geneLocation type="chloroplast"/>
<dbReference type="EMBL" id="EF380352">
    <property type="protein sequence ID" value="ABQ43282.1"/>
    <property type="molecule type" value="Genomic_DNA"/>
</dbReference>
<dbReference type="RefSeq" id="YP_001294120.1">
    <property type="nucleotide sequence ID" value="NC_009598.1"/>
</dbReference>
<dbReference type="SMR" id="A6MME4"/>
<dbReference type="GeneID" id="5236465"/>
<dbReference type="GO" id="GO:0009507">
    <property type="term" value="C:chloroplast"/>
    <property type="evidence" value="ECO:0007669"/>
    <property type="project" value="UniProtKB-SubCell"/>
</dbReference>
<dbReference type="GO" id="GO:0005763">
    <property type="term" value="C:mitochondrial small ribosomal subunit"/>
    <property type="evidence" value="ECO:0007669"/>
    <property type="project" value="TreeGrafter"/>
</dbReference>
<dbReference type="GO" id="GO:0070181">
    <property type="term" value="F:small ribosomal subunit rRNA binding"/>
    <property type="evidence" value="ECO:0007669"/>
    <property type="project" value="TreeGrafter"/>
</dbReference>
<dbReference type="GO" id="GO:0003735">
    <property type="term" value="F:structural constituent of ribosome"/>
    <property type="evidence" value="ECO:0007669"/>
    <property type="project" value="InterPro"/>
</dbReference>
<dbReference type="GO" id="GO:0006412">
    <property type="term" value="P:translation"/>
    <property type="evidence" value="ECO:0007669"/>
    <property type="project" value="UniProtKB-UniRule"/>
</dbReference>
<dbReference type="FunFam" id="4.10.640.10:FF:000002">
    <property type="entry name" value="30S ribosomal protein S18, chloroplastic"/>
    <property type="match status" value="1"/>
</dbReference>
<dbReference type="Gene3D" id="4.10.640.10">
    <property type="entry name" value="Ribosomal protein S18"/>
    <property type="match status" value="1"/>
</dbReference>
<dbReference type="HAMAP" id="MF_00270">
    <property type="entry name" value="Ribosomal_bS18"/>
    <property type="match status" value="1"/>
</dbReference>
<dbReference type="InterPro" id="IPR001648">
    <property type="entry name" value="Ribosomal_bS18"/>
</dbReference>
<dbReference type="InterPro" id="IPR018275">
    <property type="entry name" value="Ribosomal_bS18_CS"/>
</dbReference>
<dbReference type="InterPro" id="IPR036870">
    <property type="entry name" value="Ribosomal_bS18_sf"/>
</dbReference>
<dbReference type="NCBIfam" id="TIGR00165">
    <property type="entry name" value="S18"/>
    <property type="match status" value="1"/>
</dbReference>
<dbReference type="PANTHER" id="PTHR13479">
    <property type="entry name" value="30S RIBOSOMAL PROTEIN S18"/>
    <property type="match status" value="1"/>
</dbReference>
<dbReference type="PANTHER" id="PTHR13479:SF40">
    <property type="entry name" value="SMALL RIBOSOMAL SUBUNIT PROTEIN BS18M"/>
    <property type="match status" value="1"/>
</dbReference>
<dbReference type="Pfam" id="PF01084">
    <property type="entry name" value="Ribosomal_S18"/>
    <property type="match status" value="1"/>
</dbReference>
<dbReference type="PRINTS" id="PR00974">
    <property type="entry name" value="RIBOSOMALS18"/>
</dbReference>
<dbReference type="SUPFAM" id="SSF46911">
    <property type="entry name" value="Ribosomal protein S18"/>
    <property type="match status" value="1"/>
</dbReference>
<dbReference type="PROSITE" id="PS00057">
    <property type="entry name" value="RIBOSOMAL_S18"/>
    <property type="match status" value="1"/>
</dbReference>
<keyword id="KW-0150">Chloroplast</keyword>
<keyword id="KW-0934">Plastid</keyword>
<keyword id="KW-0687">Ribonucleoprotein</keyword>
<keyword id="KW-0689">Ribosomal protein</keyword>
<keyword id="KW-0694">RNA-binding</keyword>
<keyword id="KW-0699">rRNA-binding</keyword>
<proteinExistence type="inferred from homology"/>
<comment type="subunit">
    <text evidence="1">Part of the 30S ribosomal subunit.</text>
</comment>
<comment type="subcellular location">
    <subcellularLocation>
        <location>Plastid</location>
        <location>Chloroplast</location>
    </subcellularLocation>
</comment>
<comment type="similarity">
    <text evidence="1">Belongs to the bacterial ribosomal protein bS18 family.</text>
</comment>
<protein>
    <recommendedName>
        <fullName evidence="1">Small ribosomal subunit protein bS18c</fullName>
    </recommendedName>
    <alternativeName>
        <fullName evidence="3">30S ribosomal protein S18, chloroplastic</fullName>
    </alternativeName>
</protein>